<evidence type="ECO:0000250" key="1"/>
<evidence type="ECO:0000256" key="2">
    <source>
        <dbReference type="SAM" id="MobiDB-lite"/>
    </source>
</evidence>
<evidence type="ECO:0000305" key="3">
    <source>
    </source>
</evidence>
<evidence type="ECO:0000305" key="4">
    <source>
    </source>
</evidence>
<feature type="chain" id="PRO_0000279337" description="Transposon Ty2-LR2 Gag polyprotein">
    <location>
        <begin position="1"/>
        <end position="438"/>
    </location>
</feature>
<feature type="chain" id="PRO_0000279338" description="Capsid protein" evidence="1">
    <location>
        <begin position="1"/>
        <end position="397"/>
    </location>
</feature>
<feature type="peptide" id="PRO_0000279339" description="Gag-p4" evidence="1">
    <location>
        <begin position="398"/>
        <end position="438"/>
    </location>
</feature>
<feature type="region of interest" description="Disordered" evidence="2">
    <location>
        <begin position="1"/>
        <end position="88"/>
    </location>
</feature>
<feature type="region of interest" description="RNA-binding" evidence="1">
    <location>
        <begin position="295"/>
        <end position="397"/>
    </location>
</feature>
<feature type="region of interest" description="Disordered" evidence="2">
    <location>
        <begin position="364"/>
        <end position="397"/>
    </location>
</feature>
<feature type="region of interest" description="Disordered" evidence="2">
    <location>
        <begin position="418"/>
        <end position="438"/>
    </location>
</feature>
<feature type="compositionally biased region" description="Polar residues" evidence="2">
    <location>
        <begin position="1"/>
        <end position="11"/>
    </location>
</feature>
<feature type="compositionally biased region" description="Polar residues" evidence="2">
    <location>
        <begin position="19"/>
        <end position="39"/>
    </location>
</feature>
<feature type="compositionally biased region" description="Polar residues" evidence="2">
    <location>
        <begin position="49"/>
        <end position="60"/>
    </location>
</feature>
<feature type="compositionally biased region" description="Low complexity" evidence="2">
    <location>
        <begin position="369"/>
        <end position="381"/>
    </location>
</feature>
<feature type="site" description="Cleavage; by Ty2 protease" evidence="1">
    <location>
        <begin position="397"/>
        <end position="398"/>
    </location>
</feature>
<name>YL22A_YEAST</name>
<comment type="function">
    <text evidence="1">Capsid protein (CA) is the structural component of the virus-like particle (VLP), forming the shell that encapsulates the retrotransposons dimeric RNA genome. The particles are assembled from trimer-clustered units and there are holes in the capsid shells that allow for the diffusion of macromolecules. CA also has nucleocapsid-like chaperone activity, promoting primer tRNA(i)-Met annealing to the multipartite primer-binding site (PBS), dimerization of Ty2 RNA and initiation of reverse transcription (By similarity).</text>
</comment>
<comment type="subunit">
    <text evidence="1">Homotrimer.</text>
</comment>
<comment type="subcellular location">
    <subcellularLocation>
        <location evidence="1">Cytoplasm</location>
    </subcellularLocation>
</comment>
<comment type="alternative products">
    <event type="ribosomal frameshifting"/>
    <isoform>
        <id>P0C2J6-1</id>
        <name>Transposon Ty2-LR2 Gag polyprotein</name>
        <sequence type="displayed"/>
    </isoform>
    <isoform>
        <id>P0C2J5-1</id>
        <name>Transposon Ty2-LR2 Gag-Pol polyprotein</name>
        <sequence type="external"/>
    </isoform>
    <text>The Gag-Pol polyprotein is generated by a +1 ribosomal frameshift.</text>
</comment>
<comment type="domain">
    <text evidence="1">The C-terminal RNA-binding region of CA is sufficient for all its nucleocapsid-like chaperone activities.</text>
</comment>
<comment type="miscellaneous">
    <text>Retrotransposons are mobile genetic entities that are able to replicate via an RNA intermediate and a reverse transcription step. In contrast to retroviruses, retrotransposons are non-infectious, lack an envelope and remain intracellular. Ty2 retrotransposons belong to the copia elements (pseudoviridae).</text>
</comment>
<comment type="miscellaneous">
    <molecule>Isoform Transposon Ty2-LR2 Gag polyprotein</molecule>
    <text>Produced by conventional translation.</text>
</comment>
<comment type="caution">
    <text evidence="3 4">Could be the product of a pseudogene unlikely to encode a functional protein. Transposon Ty2-DR2 (YLRCTy2-2) contains a 172 aa deletion at position 1540 compared to other Ty2 elements. Because of that it is not part of the S.cerevisiae S288c complete/reference proteome set.</text>
</comment>
<gene>
    <name type="primary">TY2A-LR2</name>
    <name type="synonym">YLRCTy2-2 GAG</name>
    <name type="ordered locus">YLR424C-B</name>
    <name type="ORF">L9576.6d</name>
</gene>
<accession>P0C2J6</accession>
<dbReference type="EMBL" id="U20939">
    <property type="status" value="NOT_ANNOTATED_CDS"/>
    <property type="molecule type" value="Genomic_DNA"/>
</dbReference>
<dbReference type="PIR" id="S69968">
    <property type="entry name" value="S69968"/>
</dbReference>
<dbReference type="SMR" id="P0C2J6"/>
<dbReference type="GO" id="GO:0005737">
    <property type="term" value="C:cytoplasm"/>
    <property type="evidence" value="ECO:0007669"/>
    <property type="project" value="UniProtKB-SubCell"/>
</dbReference>
<dbReference type="GO" id="GO:0003723">
    <property type="term" value="F:RNA binding"/>
    <property type="evidence" value="ECO:0007669"/>
    <property type="project" value="UniProtKB-KW"/>
</dbReference>
<dbReference type="GO" id="GO:0075523">
    <property type="term" value="P:viral translational frameshifting"/>
    <property type="evidence" value="ECO:0007669"/>
    <property type="project" value="UniProtKB-KW"/>
</dbReference>
<dbReference type="InterPro" id="IPR015820">
    <property type="entry name" value="TYA"/>
</dbReference>
<dbReference type="Pfam" id="PF01021">
    <property type="entry name" value="TYA"/>
    <property type="match status" value="1"/>
</dbReference>
<reference key="1">
    <citation type="journal article" date="1997" name="Nature">
        <title>The nucleotide sequence of Saccharomyces cerevisiae chromosome XII.</title>
        <authorList>
            <person name="Johnston M."/>
            <person name="Hillier L.W."/>
            <person name="Riles L."/>
            <person name="Albermann K."/>
            <person name="Andre B."/>
            <person name="Ansorge W."/>
            <person name="Benes V."/>
            <person name="Brueckner M."/>
            <person name="Delius H."/>
            <person name="Dubois E."/>
            <person name="Duesterhoeft A."/>
            <person name="Entian K.-D."/>
            <person name="Floeth M."/>
            <person name="Goffeau A."/>
            <person name="Hebling U."/>
            <person name="Heumann K."/>
            <person name="Heuss-Neitzel D."/>
            <person name="Hilbert H."/>
            <person name="Hilger F."/>
            <person name="Kleine K."/>
            <person name="Koetter P."/>
            <person name="Louis E.J."/>
            <person name="Messenguy F."/>
            <person name="Mewes H.-W."/>
            <person name="Miosga T."/>
            <person name="Moestl D."/>
            <person name="Mueller-Auer S."/>
            <person name="Nentwich U."/>
            <person name="Obermaier B."/>
            <person name="Piravandi E."/>
            <person name="Pohl T.M."/>
            <person name="Portetelle D."/>
            <person name="Purnelle B."/>
            <person name="Rechmann S."/>
            <person name="Rieger M."/>
            <person name="Rinke M."/>
            <person name="Rose M."/>
            <person name="Scharfe M."/>
            <person name="Scherens B."/>
            <person name="Scholler P."/>
            <person name="Schwager C."/>
            <person name="Schwarz S."/>
            <person name="Underwood A.P."/>
            <person name="Urrestarazu L.A."/>
            <person name="Vandenbol M."/>
            <person name="Verhasselt P."/>
            <person name="Vierendeels F."/>
            <person name="Voet M."/>
            <person name="Volckaert G."/>
            <person name="Voss H."/>
            <person name="Wambutt R."/>
            <person name="Wedler E."/>
            <person name="Wedler H."/>
            <person name="Zimmermann F.K."/>
            <person name="Zollner A."/>
            <person name="Hani J."/>
            <person name="Hoheisel J.D."/>
        </authorList>
    </citation>
    <scope>NUCLEOTIDE SEQUENCE [LARGE SCALE GENOMIC DNA]</scope>
    <source>
        <strain>ATCC 204508 / S288c</strain>
    </source>
</reference>
<reference key="2">
    <citation type="journal article" date="2014" name="G3 (Bethesda)">
        <title>The reference genome sequence of Saccharomyces cerevisiae: Then and now.</title>
        <authorList>
            <person name="Engel S.R."/>
            <person name="Dietrich F.S."/>
            <person name="Fisk D.G."/>
            <person name="Binkley G."/>
            <person name="Balakrishnan R."/>
            <person name="Costanzo M.C."/>
            <person name="Dwight S.S."/>
            <person name="Hitz B.C."/>
            <person name="Karra K."/>
            <person name="Nash R.S."/>
            <person name="Weng S."/>
            <person name="Wong E.D."/>
            <person name="Lloyd P."/>
            <person name="Skrzypek M.S."/>
            <person name="Miyasato S.R."/>
            <person name="Simison M."/>
            <person name="Cherry J.M."/>
        </authorList>
    </citation>
    <scope>GENOME REANNOTATION</scope>
    <source>
        <strain>ATCC 204508 / S288c</strain>
    </source>
</reference>
<reference key="3">
    <citation type="journal article" date="1998" name="Genome Res.">
        <title>Transposable elements and genome organization: a comprehensive survey of retrotransposons revealed by the complete Saccharomyces cerevisiae genome sequence.</title>
        <authorList>
            <person name="Kim J.M."/>
            <person name="Vanguri S."/>
            <person name="Boeke J.D."/>
            <person name="Gabriel A."/>
            <person name="Voytas D.F."/>
        </authorList>
    </citation>
    <scope>NOMENCLATURE</scope>
    <scope>IDENTIFICATION AS PSEUDOGENE</scope>
</reference>
<reference key="4">
    <citation type="journal article" date="2005" name="Cytogenet. Genome Res.">
        <title>Happy together: the life and times of Ty retrotransposons and their hosts.</title>
        <authorList>
            <person name="Lesage P."/>
            <person name="Todeschini A.L."/>
        </authorList>
    </citation>
    <scope>REVIEW</scope>
</reference>
<organism>
    <name type="scientific">Saccharomyces cerevisiae (strain ATCC 204508 / S288c)</name>
    <name type="common">Baker's yeast</name>
    <dbReference type="NCBI Taxonomy" id="559292"/>
    <lineage>
        <taxon>Eukaryota</taxon>
        <taxon>Fungi</taxon>
        <taxon>Dikarya</taxon>
        <taxon>Ascomycota</taxon>
        <taxon>Saccharomycotina</taxon>
        <taxon>Saccharomycetes</taxon>
        <taxon>Saccharomycetales</taxon>
        <taxon>Saccharomycetaceae</taxon>
        <taxon>Saccharomyces</taxon>
    </lineage>
</organism>
<protein>
    <recommendedName>
        <fullName>Transposon Ty2-LR2 Gag polyprotein</fullName>
        <shortName>TY2A</shortName>
        <shortName>TYA</shortName>
        <shortName>Transposon Ty2 protein A</shortName>
    </recommendedName>
    <component>
        <recommendedName>
            <fullName>Capsid protein</fullName>
            <shortName>CA</shortName>
        </recommendedName>
    </component>
    <component>
        <recommendedName>
            <fullName>Gag-p4</fullName>
        </recommendedName>
    </component>
</protein>
<keyword id="KW-0963">Cytoplasm</keyword>
<keyword id="KW-0688">Ribosomal frameshifting</keyword>
<keyword id="KW-0694">RNA-binding</keyword>
<keyword id="KW-0814">Transposable element</keyword>
<sequence>MESQQLHQNPHSLHGSAYASVTSKEVPSNQDPLAVSASNLPEFDRDSTKVNSQEETTPGTSAVPENHHHVSPQPASVPPPQNGQYQQHGMMTPNKAMASNWAHYQQPSMMTCSHYQTSPAYYQPDPHYPLPQYIPPLSTSSPDPIDSQDQHSEVPQAKTKVRNNVLPPHTLTSEENFSTWVKFYIRFLKNSNLGDIIPNDQGEIKRQMTYEEHAYIYNTFQAFAPFHLLPTWVKQILEINYSDILTVLCKSVSKMQTNNQELKDWIALANLEYNGSTSADTFEITVSTIIQRLKENNINVSDRLACQLILKGLSGDFKYLRNQYRTKTNMKLSQLFAEIQLIYDENKIMNLNKPSQYKQHSEYKNVSRTSPNTTNTKVTTRNYHRTNSSKPRAAKAHNIATSSKFSRVNNDHINESTVSSQYLSDDNELSLRPATERI</sequence>
<proteinExistence type="uncertain"/>